<organism>
    <name type="scientific">Oryza sativa subsp. japonica</name>
    <name type="common">Rice</name>
    <dbReference type="NCBI Taxonomy" id="39947"/>
    <lineage>
        <taxon>Eukaryota</taxon>
        <taxon>Viridiplantae</taxon>
        <taxon>Streptophyta</taxon>
        <taxon>Embryophyta</taxon>
        <taxon>Tracheophyta</taxon>
        <taxon>Spermatophyta</taxon>
        <taxon>Magnoliopsida</taxon>
        <taxon>Liliopsida</taxon>
        <taxon>Poales</taxon>
        <taxon>Poaceae</taxon>
        <taxon>BOP clade</taxon>
        <taxon>Oryzoideae</taxon>
        <taxon>Oryzeae</taxon>
        <taxon>Oryzinae</taxon>
        <taxon>Oryza</taxon>
        <taxon>Oryza sativa</taxon>
    </lineage>
</organism>
<keyword id="KW-0067">ATP-binding</keyword>
<keyword id="KW-0418">Kinase</keyword>
<keyword id="KW-0464">Manganese</keyword>
<keyword id="KW-0547">Nucleotide-binding</keyword>
<keyword id="KW-1185">Reference proteome</keyword>
<keyword id="KW-0723">Serine/threonine-protein kinase</keyword>
<keyword id="KW-0808">Transferase</keyword>
<comment type="function">
    <text evidence="1">CIPK serine-threonine protein kinases interact with CBL proteins. Binding of a CBL protein to the regulatory NAF domain of CIPK protein lead to the activation of the kinase in a calcium-dependent manner (By similarity).</text>
</comment>
<comment type="catalytic activity">
    <reaction>
        <text>L-seryl-[protein] + ATP = O-phospho-L-seryl-[protein] + ADP + H(+)</text>
        <dbReference type="Rhea" id="RHEA:17989"/>
        <dbReference type="Rhea" id="RHEA-COMP:9863"/>
        <dbReference type="Rhea" id="RHEA-COMP:11604"/>
        <dbReference type="ChEBI" id="CHEBI:15378"/>
        <dbReference type="ChEBI" id="CHEBI:29999"/>
        <dbReference type="ChEBI" id="CHEBI:30616"/>
        <dbReference type="ChEBI" id="CHEBI:83421"/>
        <dbReference type="ChEBI" id="CHEBI:456216"/>
        <dbReference type="EC" id="2.7.11.1"/>
    </reaction>
</comment>
<comment type="catalytic activity">
    <reaction>
        <text>L-threonyl-[protein] + ATP = O-phospho-L-threonyl-[protein] + ADP + H(+)</text>
        <dbReference type="Rhea" id="RHEA:46608"/>
        <dbReference type="Rhea" id="RHEA-COMP:11060"/>
        <dbReference type="Rhea" id="RHEA-COMP:11605"/>
        <dbReference type="ChEBI" id="CHEBI:15378"/>
        <dbReference type="ChEBI" id="CHEBI:30013"/>
        <dbReference type="ChEBI" id="CHEBI:30616"/>
        <dbReference type="ChEBI" id="CHEBI:61977"/>
        <dbReference type="ChEBI" id="CHEBI:456216"/>
        <dbReference type="EC" id="2.7.11.1"/>
    </reaction>
</comment>
<comment type="cofactor">
    <cofactor evidence="1">
        <name>Mn(2+)</name>
        <dbReference type="ChEBI" id="CHEBI:29035"/>
    </cofactor>
</comment>
<comment type="induction">
    <text evidence="5">By salt stress and abscisic acid (ABA).</text>
</comment>
<comment type="domain">
    <text evidence="1">The activation loop within the kinase domain is the target of phosphorylation/activation by upstream protein kinases. The PPI motif mediates the interaction with the ABI (abscisic acid-insensitive) phosphatases (By similarity).</text>
</comment>
<comment type="similarity">
    <text evidence="6">Belongs to the protein kinase superfamily. CAMK Ser/Thr protein kinase family. SNF1 subfamily.</text>
</comment>
<protein>
    <recommendedName>
        <fullName>CBL-interacting protein kinase 10</fullName>
        <ecNumber>2.7.11.1</ecNumber>
    </recommendedName>
    <alternativeName>
        <fullName>OsCIPK10</fullName>
    </alternativeName>
</protein>
<sequence length="451" mass="51489">MVEQKGNILMKRYEIGKLLGQGSFAKVYHGRNIKNSQSVAIKVIDKEKILKCELMDQIRREISVMNLVRHPCIVQLYEVMATKTKIYFILEYVKGGELFNKVRRGRLKEEVARKYFQQLISAIDFCHSRGVYHRDLKPENLLLDENRNLKISDFGLSALAECKRQDGLLHTTCGTPAYVAPEVINRKGYDGAKADVWACGVILYVLLAGYLPFQDKNVINMYKKICKAEFKWPSWFSSDIRKLLRRILDPNPATRISVSEIMEDPWFRVGLNSDLLNKTIPTDKVDKVVHVDMDSTFGNLSNNINEGKQEAENLTSLNAFDIISLSSGFDLSAMFEDENSKEESKFTSTNTATTITKKLEDVAKNLRLKFLKKNGGLLKMEGSKPGRKGVMSINAEIFQITPDFHLVEFTKINGDTLEYQKVKQEMRPALKDIVWAWQGEQPQPQSLNEQS</sequence>
<proteinExistence type="evidence at transcript level"/>
<accession>Q10LQ2</accession>
<dbReference type="EC" id="2.7.11.1"/>
<dbReference type="EMBL" id="DP000009">
    <property type="protein sequence ID" value="ABF95846.1"/>
    <property type="molecule type" value="Genomic_DNA"/>
</dbReference>
<dbReference type="EMBL" id="AP008209">
    <property type="protein sequence ID" value="BAF11976.1"/>
    <property type="molecule type" value="Genomic_DNA"/>
</dbReference>
<dbReference type="EMBL" id="AP014959">
    <property type="protein sequence ID" value="BAS84113.1"/>
    <property type="molecule type" value="Genomic_DNA"/>
</dbReference>
<dbReference type="EMBL" id="AK066541">
    <property type="status" value="NOT_ANNOTATED_CDS"/>
    <property type="molecule type" value="mRNA"/>
</dbReference>
<dbReference type="RefSeq" id="XP_015631478.1">
    <property type="nucleotide sequence ID" value="XM_015775992.1"/>
</dbReference>
<dbReference type="SMR" id="Q10LQ2"/>
<dbReference type="FunCoup" id="Q10LQ2">
    <property type="interactions" value="519"/>
</dbReference>
<dbReference type="STRING" id="39947.Q10LQ2"/>
<dbReference type="PaxDb" id="39947-Q10LQ2"/>
<dbReference type="EnsemblPlants" id="Os03t0339900-01">
    <property type="protein sequence ID" value="Os03t0339900-01"/>
    <property type="gene ID" value="Os03g0339900"/>
</dbReference>
<dbReference type="Gramene" id="Os03t0339900-01">
    <property type="protein sequence ID" value="Os03t0339900-01"/>
    <property type="gene ID" value="Os03g0339900"/>
</dbReference>
<dbReference type="KEGG" id="dosa:Os03g0339900"/>
<dbReference type="eggNOG" id="KOG0583">
    <property type="taxonomic scope" value="Eukaryota"/>
</dbReference>
<dbReference type="HOGENOM" id="CLU_000288_59_0_1"/>
<dbReference type="InParanoid" id="Q10LQ2"/>
<dbReference type="OMA" id="NLVRHPC"/>
<dbReference type="OrthoDB" id="193931at2759"/>
<dbReference type="Proteomes" id="UP000000763">
    <property type="component" value="Chromosome 3"/>
</dbReference>
<dbReference type="Proteomes" id="UP000059680">
    <property type="component" value="Chromosome 3"/>
</dbReference>
<dbReference type="ExpressionAtlas" id="Q10LQ2">
    <property type="expression patterns" value="baseline and differential"/>
</dbReference>
<dbReference type="GO" id="GO:0005524">
    <property type="term" value="F:ATP binding"/>
    <property type="evidence" value="ECO:0007669"/>
    <property type="project" value="UniProtKB-KW"/>
</dbReference>
<dbReference type="GO" id="GO:0106310">
    <property type="term" value="F:protein serine kinase activity"/>
    <property type="evidence" value="ECO:0007669"/>
    <property type="project" value="RHEA"/>
</dbReference>
<dbReference type="GO" id="GO:0004674">
    <property type="term" value="F:protein serine/threonine kinase activity"/>
    <property type="evidence" value="ECO:0000318"/>
    <property type="project" value="GO_Central"/>
</dbReference>
<dbReference type="GO" id="GO:0007165">
    <property type="term" value="P:signal transduction"/>
    <property type="evidence" value="ECO:0000318"/>
    <property type="project" value="GO_Central"/>
</dbReference>
<dbReference type="CDD" id="cd12195">
    <property type="entry name" value="CIPK_C"/>
    <property type="match status" value="1"/>
</dbReference>
<dbReference type="CDD" id="cd14663">
    <property type="entry name" value="STKc_SnRK3"/>
    <property type="match status" value="1"/>
</dbReference>
<dbReference type="FunFam" id="1.10.510.10:FF:000653">
    <property type="entry name" value="Non-specific serine/threonine protein kinase"/>
    <property type="match status" value="1"/>
</dbReference>
<dbReference type="FunFam" id="3.30.200.20:FF:000096">
    <property type="entry name" value="Non-specific serine/threonine protein kinase"/>
    <property type="match status" value="1"/>
</dbReference>
<dbReference type="FunFam" id="3.30.310.80:FF:000005">
    <property type="entry name" value="Non-specific serine/threonine protein kinase"/>
    <property type="match status" value="1"/>
</dbReference>
<dbReference type="Gene3D" id="3.30.310.80">
    <property type="entry name" value="Kinase associated domain 1, KA1"/>
    <property type="match status" value="1"/>
</dbReference>
<dbReference type="Gene3D" id="3.30.200.20">
    <property type="entry name" value="Phosphorylase Kinase, domain 1"/>
    <property type="match status" value="1"/>
</dbReference>
<dbReference type="Gene3D" id="1.10.510.10">
    <property type="entry name" value="Transferase(Phosphotransferase) domain 1"/>
    <property type="match status" value="1"/>
</dbReference>
<dbReference type="InterPro" id="IPR011009">
    <property type="entry name" value="Kinase-like_dom_sf"/>
</dbReference>
<dbReference type="InterPro" id="IPR018451">
    <property type="entry name" value="NAF/FISL_domain"/>
</dbReference>
<dbReference type="InterPro" id="IPR004041">
    <property type="entry name" value="NAF_dom"/>
</dbReference>
<dbReference type="InterPro" id="IPR000719">
    <property type="entry name" value="Prot_kinase_dom"/>
</dbReference>
<dbReference type="InterPro" id="IPR017441">
    <property type="entry name" value="Protein_kinase_ATP_BS"/>
</dbReference>
<dbReference type="InterPro" id="IPR008271">
    <property type="entry name" value="Ser/Thr_kinase_AS"/>
</dbReference>
<dbReference type="PANTHER" id="PTHR43895">
    <property type="entry name" value="CALCIUM/CALMODULIN-DEPENDENT PROTEIN KINASE KINASE-RELATED"/>
    <property type="match status" value="1"/>
</dbReference>
<dbReference type="PANTHER" id="PTHR43895:SF27">
    <property type="entry name" value="CBL-INTERACTING PROTEIN KINASE 10"/>
    <property type="match status" value="1"/>
</dbReference>
<dbReference type="Pfam" id="PF03822">
    <property type="entry name" value="NAF"/>
    <property type="match status" value="1"/>
</dbReference>
<dbReference type="Pfam" id="PF00069">
    <property type="entry name" value="Pkinase"/>
    <property type="match status" value="1"/>
</dbReference>
<dbReference type="SMART" id="SM00220">
    <property type="entry name" value="S_TKc"/>
    <property type="match status" value="1"/>
</dbReference>
<dbReference type="SUPFAM" id="SSF56112">
    <property type="entry name" value="Protein kinase-like (PK-like)"/>
    <property type="match status" value="1"/>
</dbReference>
<dbReference type="PROSITE" id="PS50816">
    <property type="entry name" value="NAF"/>
    <property type="match status" value="1"/>
</dbReference>
<dbReference type="PROSITE" id="PS00107">
    <property type="entry name" value="PROTEIN_KINASE_ATP"/>
    <property type="match status" value="1"/>
</dbReference>
<dbReference type="PROSITE" id="PS50011">
    <property type="entry name" value="PROTEIN_KINASE_DOM"/>
    <property type="match status" value="1"/>
</dbReference>
<dbReference type="PROSITE" id="PS00108">
    <property type="entry name" value="PROTEIN_KINASE_ST"/>
    <property type="match status" value="1"/>
</dbReference>
<name>CIPKA_ORYSJ</name>
<evidence type="ECO:0000250" key="1"/>
<evidence type="ECO:0000255" key="2">
    <source>
        <dbReference type="PROSITE-ProRule" id="PRU00159"/>
    </source>
</evidence>
<evidence type="ECO:0000255" key="3">
    <source>
        <dbReference type="PROSITE-ProRule" id="PRU00256"/>
    </source>
</evidence>
<evidence type="ECO:0000255" key="4">
    <source>
        <dbReference type="PROSITE-ProRule" id="PRU10027"/>
    </source>
</evidence>
<evidence type="ECO:0000269" key="5">
    <source>
    </source>
</evidence>
<evidence type="ECO:0000305" key="6"/>
<feature type="chain" id="PRO_0000338368" description="CBL-interacting protein kinase 10">
    <location>
        <begin position="1"/>
        <end position="451"/>
    </location>
</feature>
<feature type="domain" description="Protein kinase" evidence="2">
    <location>
        <begin position="13"/>
        <end position="267"/>
    </location>
</feature>
<feature type="domain" description="NAF" evidence="3">
    <location>
        <begin position="304"/>
        <end position="336"/>
    </location>
</feature>
<feature type="region of interest" description="Activation loop" evidence="1">
    <location>
        <begin position="153"/>
        <end position="182"/>
    </location>
</feature>
<feature type="region of interest" description="PPI" evidence="1">
    <location>
        <begin position="341"/>
        <end position="370"/>
    </location>
</feature>
<feature type="active site" description="Proton acceptor" evidence="2 4">
    <location>
        <position position="135"/>
    </location>
</feature>
<feature type="binding site" evidence="2">
    <location>
        <begin position="19"/>
        <end position="27"/>
    </location>
    <ligand>
        <name>ATP</name>
        <dbReference type="ChEBI" id="CHEBI:30616"/>
    </ligand>
</feature>
<feature type="binding site" evidence="2">
    <location>
        <position position="42"/>
    </location>
    <ligand>
        <name>ATP</name>
        <dbReference type="ChEBI" id="CHEBI:30616"/>
    </ligand>
</feature>
<reference key="1">
    <citation type="journal article" date="2005" name="Genome Res.">
        <title>Sequence, annotation, and analysis of synteny between rice chromosome 3 and diverged grass species.</title>
        <authorList>
            <consortium name="The rice chromosome 3 sequencing consortium"/>
            <person name="Buell C.R."/>
            <person name="Yuan Q."/>
            <person name="Ouyang S."/>
            <person name="Liu J."/>
            <person name="Zhu W."/>
            <person name="Wang A."/>
            <person name="Maiti R."/>
            <person name="Haas B."/>
            <person name="Wortman J."/>
            <person name="Pertea M."/>
            <person name="Jones K.M."/>
            <person name="Kim M."/>
            <person name="Overton L."/>
            <person name="Tsitrin T."/>
            <person name="Fadrosh D."/>
            <person name="Bera J."/>
            <person name="Weaver B."/>
            <person name="Jin S."/>
            <person name="Johri S."/>
            <person name="Reardon M."/>
            <person name="Webb K."/>
            <person name="Hill J."/>
            <person name="Moffat K."/>
            <person name="Tallon L."/>
            <person name="Van Aken S."/>
            <person name="Lewis M."/>
            <person name="Utterback T."/>
            <person name="Feldblyum T."/>
            <person name="Zismann V."/>
            <person name="Iobst S."/>
            <person name="Hsiao J."/>
            <person name="de Vazeille A.R."/>
            <person name="Salzberg S.L."/>
            <person name="White O."/>
            <person name="Fraser C.M."/>
            <person name="Yu Y."/>
            <person name="Kim H."/>
            <person name="Rambo T."/>
            <person name="Currie J."/>
            <person name="Collura K."/>
            <person name="Kernodle-Thompson S."/>
            <person name="Wei F."/>
            <person name="Kudrna K."/>
            <person name="Ammiraju J.S.S."/>
            <person name="Luo M."/>
            <person name="Goicoechea J.L."/>
            <person name="Wing R.A."/>
            <person name="Henry D."/>
            <person name="Oates R."/>
            <person name="Palmer M."/>
            <person name="Pries G."/>
            <person name="Saski C."/>
            <person name="Simmons J."/>
            <person name="Soderlund C."/>
            <person name="Nelson W."/>
            <person name="de la Bastide M."/>
            <person name="Spiegel L."/>
            <person name="Nascimento L."/>
            <person name="Huang E."/>
            <person name="Preston R."/>
            <person name="Zutavern T."/>
            <person name="Palmer L."/>
            <person name="O'Shaughnessy A."/>
            <person name="Dike S."/>
            <person name="McCombie W.R."/>
            <person name="Minx P."/>
            <person name="Cordum H."/>
            <person name="Wilson R."/>
            <person name="Jin W."/>
            <person name="Lee H.R."/>
            <person name="Jiang J."/>
            <person name="Jackson S."/>
        </authorList>
    </citation>
    <scope>NUCLEOTIDE SEQUENCE [LARGE SCALE GENOMIC DNA]</scope>
    <source>
        <strain>cv. Nipponbare</strain>
    </source>
</reference>
<reference key="2">
    <citation type="journal article" date="2005" name="Nature">
        <title>The map-based sequence of the rice genome.</title>
        <authorList>
            <consortium name="International rice genome sequencing project (IRGSP)"/>
        </authorList>
    </citation>
    <scope>NUCLEOTIDE SEQUENCE [LARGE SCALE GENOMIC DNA]</scope>
    <source>
        <strain>cv. Nipponbare</strain>
    </source>
</reference>
<reference key="3">
    <citation type="journal article" date="2008" name="Nucleic Acids Res.">
        <title>The rice annotation project database (RAP-DB): 2008 update.</title>
        <authorList>
            <consortium name="The rice annotation project (RAP)"/>
        </authorList>
    </citation>
    <scope>GENOME REANNOTATION</scope>
    <source>
        <strain>cv. Nipponbare</strain>
    </source>
</reference>
<reference key="4">
    <citation type="journal article" date="2013" name="Rice">
        <title>Improvement of the Oryza sativa Nipponbare reference genome using next generation sequence and optical map data.</title>
        <authorList>
            <person name="Kawahara Y."/>
            <person name="de la Bastide M."/>
            <person name="Hamilton J.P."/>
            <person name="Kanamori H."/>
            <person name="McCombie W.R."/>
            <person name="Ouyang S."/>
            <person name="Schwartz D.C."/>
            <person name="Tanaka T."/>
            <person name="Wu J."/>
            <person name="Zhou S."/>
            <person name="Childs K.L."/>
            <person name="Davidson R.M."/>
            <person name="Lin H."/>
            <person name="Quesada-Ocampo L."/>
            <person name="Vaillancourt B."/>
            <person name="Sakai H."/>
            <person name="Lee S.S."/>
            <person name="Kim J."/>
            <person name="Numa H."/>
            <person name="Itoh T."/>
            <person name="Buell C.R."/>
            <person name="Matsumoto T."/>
        </authorList>
    </citation>
    <scope>GENOME REANNOTATION</scope>
    <source>
        <strain>cv. Nipponbare</strain>
    </source>
</reference>
<reference key="5">
    <citation type="journal article" date="2003" name="Science">
        <title>Collection, mapping, and annotation of over 28,000 cDNA clones from japonica rice.</title>
        <authorList>
            <consortium name="The rice full-length cDNA consortium"/>
        </authorList>
    </citation>
    <scope>NUCLEOTIDE SEQUENCE [LARGE SCALE MRNA]</scope>
    <source>
        <strain>cv. Nipponbare</strain>
    </source>
</reference>
<reference key="6">
    <citation type="journal article" date="2004" name="Plant Physiol.">
        <title>Calcium sensors and their interacting protein kinases: genomics of the Arabidopsis and rice CBL-CIPK signaling networks.</title>
        <authorList>
            <person name="Kolukisaoglu U."/>
            <person name="Weinl S."/>
            <person name="Blazevic D."/>
            <person name="Batistic O."/>
            <person name="Kudla J."/>
        </authorList>
    </citation>
    <scope>GENE FAMILY</scope>
    <scope>NOMENCLATURE</scope>
</reference>
<reference key="7">
    <citation type="journal article" date="2007" name="Plant Physiol.">
        <title>Characterization of stress-responsive CIPK genes in rice for stress tolerance improvement.</title>
        <authorList>
            <person name="Xiang Y."/>
            <person name="Huang Y."/>
            <person name="Xiong L."/>
        </authorList>
    </citation>
    <scope>INDUCTION</scope>
</reference>
<gene>
    <name type="primary">CIPK10</name>
    <name type="ordered locus">Os03g0339900</name>
    <name type="ordered locus">LOC_Os03g22050</name>
</gene>